<dbReference type="EMBL" id="AF041468">
    <property type="protein sequence ID" value="AAC35597.1"/>
    <property type="molecule type" value="Genomic_DNA"/>
</dbReference>
<dbReference type="RefSeq" id="NP_050663.1">
    <property type="nucleotide sequence ID" value="NC_000926.1"/>
</dbReference>
<dbReference type="SMR" id="O78412"/>
<dbReference type="GeneID" id="856949"/>
<dbReference type="HOGENOM" id="CLU_074237_2_2_1"/>
<dbReference type="OMA" id="CKNIDSA"/>
<dbReference type="GO" id="GO:0009507">
    <property type="term" value="C:chloroplast"/>
    <property type="evidence" value="ECO:0007669"/>
    <property type="project" value="UniProtKB-SubCell"/>
</dbReference>
<dbReference type="GO" id="GO:0022625">
    <property type="term" value="C:cytosolic large ribosomal subunit"/>
    <property type="evidence" value="ECO:0007669"/>
    <property type="project" value="TreeGrafter"/>
</dbReference>
<dbReference type="GO" id="GO:0070180">
    <property type="term" value="F:large ribosomal subunit rRNA binding"/>
    <property type="evidence" value="ECO:0007669"/>
    <property type="project" value="UniProtKB-UniRule"/>
</dbReference>
<dbReference type="GO" id="GO:0003735">
    <property type="term" value="F:structural constituent of ribosome"/>
    <property type="evidence" value="ECO:0007669"/>
    <property type="project" value="InterPro"/>
</dbReference>
<dbReference type="GO" id="GO:0006412">
    <property type="term" value="P:translation"/>
    <property type="evidence" value="ECO:0007669"/>
    <property type="project" value="UniProtKB-UniRule"/>
</dbReference>
<dbReference type="CDD" id="cd00349">
    <property type="entry name" value="Ribosomal_L11"/>
    <property type="match status" value="1"/>
</dbReference>
<dbReference type="FunFam" id="1.10.10.250:FF:000001">
    <property type="entry name" value="50S ribosomal protein L11"/>
    <property type="match status" value="1"/>
</dbReference>
<dbReference type="FunFam" id="3.30.1550.10:FF:000001">
    <property type="entry name" value="50S ribosomal protein L11"/>
    <property type="match status" value="1"/>
</dbReference>
<dbReference type="Gene3D" id="1.10.10.250">
    <property type="entry name" value="Ribosomal protein L11, C-terminal domain"/>
    <property type="match status" value="1"/>
</dbReference>
<dbReference type="Gene3D" id="3.30.1550.10">
    <property type="entry name" value="Ribosomal protein L11/L12, N-terminal domain"/>
    <property type="match status" value="1"/>
</dbReference>
<dbReference type="HAMAP" id="MF_00736">
    <property type="entry name" value="Ribosomal_uL11"/>
    <property type="match status" value="1"/>
</dbReference>
<dbReference type="InterPro" id="IPR000911">
    <property type="entry name" value="Ribosomal_uL11"/>
</dbReference>
<dbReference type="InterPro" id="IPR006519">
    <property type="entry name" value="Ribosomal_uL11_bac-typ"/>
</dbReference>
<dbReference type="InterPro" id="IPR020783">
    <property type="entry name" value="Ribosomal_uL11_C"/>
</dbReference>
<dbReference type="InterPro" id="IPR036769">
    <property type="entry name" value="Ribosomal_uL11_C_sf"/>
</dbReference>
<dbReference type="InterPro" id="IPR020785">
    <property type="entry name" value="Ribosomal_uL11_CS"/>
</dbReference>
<dbReference type="InterPro" id="IPR020784">
    <property type="entry name" value="Ribosomal_uL11_N"/>
</dbReference>
<dbReference type="InterPro" id="IPR036796">
    <property type="entry name" value="Ribosomal_uL11_N_sf"/>
</dbReference>
<dbReference type="NCBIfam" id="TIGR01632">
    <property type="entry name" value="L11_bact"/>
    <property type="match status" value="1"/>
</dbReference>
<dbReference type="PANTHER" id="PTHR11661">
    <property type="entry name" value="60S RIBOSOMAL PROTEIN L12"/>
    <property type="match status" value="1"/>
</dbReference>
<dbReference type="PANTHER" id="PTHR11661:SF1">
    <property type="entry name" value="LARGE RIBOSOMAL SUBUNIT PROTEIN UL11M"/>
    <property type="match status" value="1"/>
</dbReference>
<dbReference type="Pfam" id="PF00298">
    <property type="entry name" value="Ribosomal_L11"/>
    <property type="match status" value="1"/>
</dbReference>
<dbReference type="Pfam" id="PF03946">
    <property type="entry name" value="Ribosomal_L11_N"/>
    <property type="match status" value="1"/>
</dbReference>
<dbReference type="SMART" id="SM00649">
    <property type="entry name" value="RL11"/>
    <property type="match status" value="1"/>
</dbReference>
<dbReference type="SUPFAM" id="SSF54747">
    <property type="entry name" value="Ribosomal L11/L12e N-terminal domain"/>
    <property type="match status" value="1"/>
</dbReference>
<dbReference type="SUPFAM" id="SSF46906">
    <property type="entry name" value="Ribosomal protein L11, C-terminal domain"/>
    <property type="match status" value="1"/>
</dbReference>
<dbReference type="PROSITE" id="PS00359">
    <property type="entry name" value="RIBOSOMAL_L11"/>
    <property type="match status" value="1"/>
</dbReference>
<accession>O78412</accession>
<name>RK11_GUITH</name>
<feature type="chain" id="PRO_0000104425" description="Large ribosomal subunit protein uL11c">
    <location>
        <begin position="1"/>
        <end position="141"/>
    </location>
</feature>
<evidence type="ECO:0000255" key="1">
    <source>
        <dbReference type="HAMAP-Rule" id="MF_00736"/>
    </source>
</evidence>
<evidence type="ECO:0000305" key="2"/>
<geneLocation type="chloroplast"/>
<keyword id="KW-0150">Chloroplast</keyword>
<keyword id="KW-0934">Plastid</keyword>
<keyword id="KW-0687">Ribonucleoprotein</keyword>
<keyword id="KW-0689">Ribosomal protein</keyword>
<keyword id="KW-0694">RNA-binding</keyword>
<keyword id="KW-0699">rRNA-binding</keyword>
<proteinExistence type="inferred from homology"/>
<comment type="function">
    <text evidence="1">Forms part of the ribosomal stalk which helps the ribosome interact with GTP-bound translation factors.</text>
</comment>
<comment type="subunit">
    <text evidence="1">Part of the ribosomal stalk of the 50S ribosomal subunit. Interacts with L10 and the large rRNA to form the base of the stalk. L10 forms an elongated spine to which L12 dimers bind in a sequential fashion forming a multimeric L10(L12)X complex.</text>
</comment>
<comment type="subcellular location">
    <subcellularLocation>
        <location>Plastid</location>
        <location>Chloroplast</location>
    </subcellularLocation>
</comment>
<comment type="similarity">
    <text evidence="1">Belongs to the universal ribosomal protein uL11 family.</text>
</comment>
<gene>
    <name evidence="1" type="primary">rpl11</name>
</gene>
<organism>
    <name type="scientific">Guillardia theta</name>
    <name type="common">Cryptophyte</name>
    <name type="synonym">Cryptomonas phi</name>
    <dbReference type="NCBI Taxonomy" id="55529"/>
    <lineage>
        <taxon>Eukaryota</taxon>
        <taxon>Cryptophyceae</taxon>
        <taxon>Pyrenomonadales</taxon>
        <taxon>Geminigeraceae</taxon>
        <taxon>Guillardia</taxon>
    </lineage>
</organism>
<reference key="1">
    <citation type="journal article" date="1999" name="J. Mol. Evol.">
        <title>The plastid genome of the cryptophyte alga, Guillardia theta: complete sequence and conserved synteny groups confirm its common ancestry with red algae.</title>
        <authorList>
            <person name="Douglas S.E."/>
            <person name="Penny S.L."/>
        </authorList>
    </citation>
    <scope>NUCLEOTIDE SEQUENCE [LARGE SCALE GENOMIC DNA]</scope>
</reference>
<sequence>MAKKVVAIIKLALEAGKATPAPPVGPALGQRGVNIVMFCKDYNARTADKAGLIIPVEITVYEDKSYTFVLKTPPASVLLAKAAGVQKGSGNPKKTQVGSVTKKQVEEIAQTKLPDLNTRRLESAIRIIEGTAKNMGIGVTD</sequence>
<protein>
    <recommendedName>
        <fullName evidence="1">Large ribosomal subunit protein uL11c</fullName>
    </recommendedName>
    <alternativeName>
        <fullName evidence="2">50S ribosomal protein L11, chloroplastic</fullName>
    </alternativeName>
</protein>